<protein>
    <recommendedName>
        <fullName>Tubulin gamma-1 chain</fullName>
    </recommendedName>
    <alternativeName>
        <fullName>Gamma-1-tubulin</fullName>
        <shortName>xGAM</shortName>
    </alternativeName>
</protein>
<name>TBG1_XENLA</name>
<keyword id="KW-0002">3D-structure</keyword>
<keyword id="KW-0963">Cytoplasm</keyword>
<keyword id="KW-0206">Cytoskeleton</keyword>
<keyword id="KW-0342">GTP-binding</keyword>
<keyword id="KW-0493">Microtubule</keyword>
<keyword id="KW-0547">Nucleotide-binding</keyword>
<keyword id="KW-1185">Reference proteome</keyword>
<evidence type="ECO:0000250" key="1">
    <source>
        <dbReference type="UniProtKB" id="P23258"/>
    </source>
</evidence>
<evidence type="ECO:0000255" key="2"/>
<evidence type="ECO:0000305" key="3"/>
<reference key="1">
    <citation type="journal article" date="1991" name="Cell">
        <title>Gamma-tubulin is a highly conserved component of the centrosome.</title>
        <authorList>
            <person name="Stearns T."/>
            <person name="Evans L."/>
            <person name="Kirschner M."/>
        </authorList>
    </citation>
    <scope>NUCLEOTIDE SEQUENCE [MRNA]</scope>
</reference>
<dbReference type="EMBL" id="M63446">
    <property type="protein sequence ID" value="AAA49720.1"/>
    <property type="molecule type" value="mRNA"/>
</dbReference>
<dbReference type="PIR" id="A39528">
    <property type="entry name" value="UBXLG"/>
</dbReference>
<dbReference type="PDB" id="6TF9">
    <property type="method" value="EM"/>
    <property type="resolution" value="4.80 A"/>
    <property type="chains" value="TP1/hP1/iP1/kP1/lP1/mP1/nP1/oP1/pP1/qP1/rP1/sP1/tP1/wP1=1-451"/>
</dbReference>
<dbReference type="PDB" id="9EOJ">
    <property type="method" value="EM"/>
    <property type="resolution" value="17.00 A"/>
    <property type="chains" value="T/h/i/k/l/m/n/o/p/q/r/s/t/w=1-451"/>
</dbReference>
<dbReference type="PDBsum" id="6TF9"/>
<dbReference type="PDBsum" id="9EOJ"/>
<dbReference type="EMDB" id="EMD-10491"/>
<dbReference type="EMDB" id="EMD-19861"/>
<dbReference type="SMR" id="P23330"/>
<dbReference type="IntAct" id="P23330">
    <property type="interactions" value="1"/>
</dbReference>
<dbReference type="AGR" id="Xenbase:XB-GENE-866048"/>
<dbReference type="Xenbase" id="XB-GENE-866048">
    <property type="gene designation" value="tubg1.L"/>
</dbReference>
<dbReference type="Proteomes" id="UP000186698">
    <property type="component" value="Unplaced"/>
</dbReference>
<dbReference type="GO" id="GO:0005813">
    <property type="term" value="C:centrosome"/>
    <property type="evidence" value="ECO:0000250"/>
    <property type="project" value="UniProtKB"/>
</dbReference>
<dbReference type="GO" id="GO:0005737">
    <property type="term" value="C:cytoplasm"/>
    <property type="evidence" value="ECO:0000250"/>
    <property type="project" value="UniProtKB"/>
</dbReference>
<dbReference type="GO" id="GO:0000930">
    <property type="term" value="C:gamma-tubulin complex"/>
    <property type="evidence" value="ECO:0000314"/>
    <property type="project" value="Xenbase"/>
</dbReference>
<dbReference type="GO" id="GO:0000931">
    <property type="term" value="C:gamma-tubulin ring complex"/>
    <property type="evidence" value="ECO:0000318"/>
    <property type="project" value="GO_Central"/>
</dbReference>
<dbReference type="GO" id="GO:1990498">
    <property type="term" value="C:mitotic spindle microtubule"/>
    <property type="evidence" value="ECO:0000250"/>
    <property type="project" value="UniProtKB"/>
</dbReference>
<dbReference type="GO" id="GO:0005634">
    <property type="term" value="C:nucleus"/>
    <property type="evidence" value="ECO:0000318"/>
    <property type="project" value="GO_Central"/>
</dbReference>
<dbReference type="GO" id="GO:0005827">
    <property type="term" value="C:polar microtubule"/>
    <property type="evidence" value="ECO:0000250"/>
    <property type="project" value="UniProtKB"/>
</dbReference>
<dbReference type="GO" id="GO:0005819">
    <property type="term" value="C:spindle"/>
    <property type="evidence" value="ECO:0000318"/>
    <property type="project" value="GO_Central"/>
</dbReference>
<dbReference type="GO" id="GO:0005525">
    <property type="term" value="F:GTP binding"/>
    <property type="evidence" value="ECO:0000318"/>
    <property type="project" value="GO_Central"/>
</dbReference>
<dbReference type="GO" id="GO:0140490">
    <property type="term" value="F:microtubule nucleator activity"/>
    <property type="evidence" value="ECO:0000314"/>
    <property type="project" value="Xenbase"/>
</dbReference>
<dbReference type="GO" id="GO:0015631">
    <property type="term" value="F:tubulin binding"/>
    <property type="evidence" value="ECO:0000314"/>
    <property type="project" value="Xenbase"/>
</dbReference>
<dbReference type="GO" id="GO:0031122">
    <property type="term" value="P:cytoplasmic microtubule organization"/>
    <property type="evidence" value="ECO:0007669"/>
    <property type="project" value="InterPro"/>
</dbReference>
<dbReference type="GO" id="GO:0000212">
    <property type="term" value="P:meiotic spindle organization"/>
    <property type="evidence" value="ECO:0000318"/>
    <property type="project" value="GO_Central"/>
</dbReference>
<dbReference type="GO" id="GO:0007020">
    <property type="term" value="P:microtubule nucleation"/>
    <property type="evidence" value="ECO:0000314"/>
    <property type="project" value="Xenbase"/>
</dbReference>
<dbReference type="GO" id="GO:0000278">
    <property type="term" value="P:mitotic cell cycle"/>
    <property type="evidence" value="ECO:0000318"/>
    <property type="project" value="GO_Central"/>
</dbReference>
<dbReference type="GO" id="GO:0000070">
    <property type="term" value="P:mitotic sister chromatid segregation"/>
    <property type="evidence" value="ECO:0000318"/>
    <property type="project" value="GO_Central"/>
</dbReference>
<dbReference type="GO" id="GO:0007052">
    <property type="term" value="P:mitotic spindle organization"/>
    <property type="evidence" value="ECO:0000318"/>
    <property type="project" value="GO_Central"/>
</dbReference>
<dbReference type="CDD" id="cd02188">
    <property type="entry name" value="gamma_tubulin"/>
    <property type="match status" value="1"/>
</dbReference>
<dbReference type="FunFam" id="1.10.287.600:FF:000004">
    <property type="entry name" value="Tubulin gamma chain"/>
    <property type="match status" value="1"/>
</dbReference>
<dbReference type="FunFam" id="3.30.1330.20:FF:000003">
    <property type="entry name" value="Tubulin gamma chain"/>
    <property type="match status" value="1"/>
</dbReference>
<dbReference type="FunFam" id="3.40.50.1440:FF:000010">
    <property type="entry name" value="Tubulin gamma chain"/>
    <property type="match status" value="1"/>
</dbReference>
<dbReference type="Gene3D" id="1.10.287.600">
    <property type="entry name" value="Helix hairpin bin"/>
    <property type="match status" value="1"/>
</dbReference>
<dbReference type="Gene3D" id="3.30.1330.20">
    <property type="entry name" value="Tubulin/FtsZ, C-terminal domain"/>
    <property type="match status" value="1"/>
</dbReference>
<dbReference type="Gene3D" id="3.40.50.1440">
    <property type="entry name" value="Tubulin/FtsZ, GTPase domain"/>
    <property type="match status" value="1"/>
</dbReference>
<dbReference type="InterPro" id="IPR002454">
    <property type="entry name" value="Gamma_tubulin"/>
</dbReference>
<dbReference type="InterPro" id="IPR008280">
    <property type="entry name" value="Tub_FtsZ_C"/>
</dbReference>
<dbReference type="InterPro" id="IPR000217">
    <property type="entry name" value="Tubulin"/>
</dbReference>
<dbReference type="InterPro" id="IPR037103">
    <property type="entry name" value="Tubulin/FtsZ-like_C"/>
</dbReference>
<dbReference type="InterPro" id="IPR018316">
    <property type="entry name" value="Tubulin/FtsZ_2-layer-sand-dom"/>
</dbReference>
<dbReference type="InterPro" id="IPR036525">
    <property type="entry name" value="Tubulin/FtsZ_GTPase_sf"/>
</dbReference>
<dbReference type="InterPro" id="IPR023123">
    <property type="entry name" value="Tubulin_C"/>
</dbReference>
<dbReference type="InterPro" id="IPR017975">
    <property type="entry name" value="Tubulin_CS"/>
</dbReference>
<dbReference type="InterPro" id="IPR003008">
    <property type="entry name" value="Tubulin_FtsZ_GTPase"/>
</dbReference>
<dbReference type="PANTHER" id="PTHR11588">
    <property type="entry name" value="TUBULIN"/>
    <property type="match status" value="1"/>
</dbReference>
<dbReference type="Pfam" id="PF00091">
    <property type="entry name" value="Tubulin"/>
    <property type="match status" value="1"/>
</dbReference>
<dbReference type="Pfam" id="PF03953">
    <property type="entry name" value="Tubulin_C"/>
    <property type="match status" value="1"/>
</dbReference>
<dbReference type="PRINTS" id="PR01164">
    <property type="entry name" value="GAMMATUBULIN"/>
</dbReference>
<dbReference type="PRINTS" id="PR01161">
    <property type="entry name" value="TUBULIN"/>
</dbReference>
<dbReference type="SMART" id="SM00864">
    <property type="entry name" value="Tubulin"/>
    <property type="match status" value="1"/>
</dbReference>
<dbReference type="SMART" id="SM00865">
    <property type="entry name" value="Tubulin_C"/>
    <property type="match status" value="1"/>
</dbReference>
<dbReference type="SUPFAM" id="SSF55307">
    <property type="entry name" value="Tubulin C-terminal domain-like"/>
    <property type="match status" value="1"/>
</dbReference>
<dbReference type="SUPFAM" id="SSF52490">
    <property type="entry name" value="Tubulin nucleotide-binding domain-like"/>
    <property type="match status" value="1"/>
</dbReference>
<dbReference type="PROSITE" id="PS00227">
    <property type="entry name" value="TUBULIN"/>
    <property type="match status" value="1"/>
</dbReference>
<gene>
    <name type="primary">tubg1</name>
</gene>
<comment type="function">
    <text>Tubulin is the major constituent of microtubules. The gamma chain is found at microtubule organizing centers (MTOC) such as the spindle poles or the centrosome, suggesting that it is involved in the minus-end nucleation of microtubule assembly.</text>
</comment>
<comment type="subcellular location">
    <subcellularLocation>
        <location evidence="3">Cytoplasm</location>
        <location evidence="3">Cytoskeleton</location>
        <location evidence="3">Microtubule organizing center</location>
        <location evidence="3">Centrosome</location>
    </subcellularLocation>
    <subcellularLocation>
        <location evidence="1">Cytoplasm</location>
        <location evidence="1">Cytoskeleton</location>
        <location evidence="1">Spindle</location>
    </subcellularLocation>
    <text evidence="1">Localizes to mitotic spindle microtubules.</text>
</comment>
<comment type="similarity">
    <text evidence="3">Belongs to the tubulin family.</text>
</comment>
<organism>
    <name type="scientific">Xenopus laevis</name>
    <name type="common">African clawed frog</name>
    <dbReference type="NCBI Taxonomy" id="8355"/>
    <lineage>
        <taxon>Eukaryota</taxon>
        <taxon>Metazoa</taxon>
        <taxon>Chordata</taxon>
        <taxon>Craniata</taxon>
        <taxon>Vertebrata</taxon>
        <taxon>Euteleostomi</taxon>
        <taxon>Amphibia</taxon>
        <taxon>Batrachia</taxon>
        <taxon>Anura</taxon>
        <taxon>Pipoidea</taxon>
        <taxon>Pipidae</taxon>
        <taxon>Xenopodinae</taxon>
        <taxon>Xenopus</taxon>
        <taxon>Xenopus</taxon>
    </lineage>
</organism>
<feature type="chain" id="PRO_0000048470" description="Tubulin gamma-1 chain">
    <location>
        <begin position="1"/>
        <end position="451"/>
    </location>
</feature>
<feature type="binding site" evidence="2">
    <location>
        <begin position="142"/>
        <end position="148"/>
    </location>
    <ligand>
        <name>GTP</name>
        <dbReference type="ChEBI" id="CHEBI:37565"/>
    </ligand>
</feature>
<sequence>MPREIITLQLGQCGNQIGFEFWKQLCAEHGISPEGIVEEFATEGTDRKDVFFYQADDEHYIPRAVLLDLEPRVIHSILNSPYANLYNPENIYLSEHGGGAGNNWASGFSQGEKIHEDIFDIIDREADGSDSLEGFVLCHSIAGGTGSGLGSYLLERLNDRYPKKLVQTYSVFPNQDEMSHVVVQPYNSLLTLKRLTQNADCVVVLDNTALNRIATDRLHIQNPSFSQINQLVSTIMSASTTTLRYPGYMNNDLIGLIASLIPTPRLHFLMTGYTPLTTDQSVASVRKTTVLDVMRRLLQPKNVMVSTGRDRQTNHCYIAILNIIQGEVDPTQVHKSLQRIRERKLANFIPWGPASIQVALSRKSPYLPSAHRVSGLMMANHTNISSLFERTCRQYDKLRKREAFLEQFRKEDIFKDNFDELDNSREIVQQLIDEYHAATRPDYISWGTQDK</sequence>
<proteinExistence type="evidence at protein level"/>
<accession>P23330</accession>